<protein>
    <recommendedName>
        <fullName evidence="3">Large ribosomal subunit protein mL51</fullName>
    </recommendedName>
    <alternativeName>
        <fullName>39S ribosomal protein L51, mitochondrial</fullName>
        <shortName>L51mt</shortName>
        <shortName>MRP-L51</shortName>
    </alternativeName>
</protein>
<evidence type="ECO:0000250" key="1">
    <source>
        <dbReference type="UniProtKB" id="Q4U2R6"/>
    </source>
</evidence>
<evidence type="ECO:0000255" key="2"/>
<evidence type="ECO:0000305" key="3"/>
<accession>Q5ZKG1</accession>
<organism>
    <name type="scientific">Gallus gallus</name>
    <name type="common">Chicken</name>
    <dbReference type="NCBI Taxonomy" id="9031"/>
    <lineage>
        <taxon>Eukaryota</taxon>
        <taxon>Metazoa</taxon>
        <taxon>Chordata</taxon>
        <taxon>Craniata</taxon>
        <taxon>Vertebrata</taxon>
        <taxon>Euteleostomi</taxon>
        <taxon>Archelosauria</taxon>
        <taxon>Archosauria</taxon>
        <taxon>Dinosauria</taxon>
        <taxon>Saurischia</taxon>
        <taxon>Theropoda</taxon>
        <taxon>Coelurosauria</taxon>
        <taxon>Aves</taxon>
        <taxon>Neognathae</taxon>
        <taxon>Galloanserae</taxon>
        <taxon>Galliformes</taxon>
        <taxon>Phasianidae</taxon>
        <taxon>Phasianinae</taxon>
        <taxon>Gallus</taxon>
    </lineage>
</organism>
<comment type="subunit">
    <text evidence="1">Component of the mitochondrial ribosome large subunit (39S) which comprises a 16S rRNA and about 50 distinct proteins (By similarity).</text>
</comment>
<comment type="subcellular location">
    <subcellularLocation>
        <location evidence="1">Mitochondrion</location>
    </subcellularLocation>
</comment>
<comment type="similarity">
    <text evidence="3">Belongs to the mitochondrion-specific ribosomal protein mL51 family.</text>
</comment>
<keyword id="KW-0496">Mitochondrion</keyword>
<keyword id="KW-1185">Reference proteome</keyword>
<keyword id="KW-0687">Ribonucleoprotein</keyword>
<keyword id="KW-0689">Ribosomal protein</keyword>
<keyword id="KW-0809">Transit peptide</keyword>
<sequence>MAALVRGLMRRVAALPQAVRSVSGGGQRHEPYRPLPITSPLAGLPRNFRVREPPKPQKVDRWTEKRALFGVYDNVGILGGFQIHPKHLIMGPKWLRGWRGNELQRCIRKKQMVGDRMFMDDYHNLKKRIRFLYKRFNRTGKHR</sequence>
<gene>
    <name type="primary">MRPL51</name>
    <name type="ORF">RCJMB04_11a19</name>
</gene>
<dbReference type="EMBL" id="AJ720123">
    <property type="protein sequence ID" value="CAG31782.1"/>
    <property type="molecule type" value="mRNA"/>
</dbReference>
<dbReference type="RefSeq" id="NP_001008675.1">
    <property type="nucleotide sequence ID" value="NM_001008675.1"/>
</dbReference>
<dbReference type="SMR" id="Q5ZKG1"/>
<dbReference type="FunCoup" id="Q5ZKG1">
    <property type="interactions" value="1056"/>
</dbReference>
<dbReference type="STRING" id="9031.ENSGALP00000023269"/>
<dbReference type="PaxDb" id="9031-ENSGALP00000023269"/>
<dbReference type="GeneID" id="418274"/>
<dbReference type="KEGG" id="gga:418274"/>
<dbReference type="CTD" id="51258"/>
<dbReference type="VEuPathDB" id="HostDB:geneid_418274"/>
<dbReference type="eggNOG" id="KOG4045">
    <property type="taxonomic scope" value="Eukaryota"/>
</dbReference>
<dbReference type="HOGENOM" id="CLU_150741_0_0_1"/>
<dbReference type="InParanoid" id="Q5ZKG1"/>
<dbReference type="OMA" id="IHPKHLI"/>
<dbReference type="OrthoDB" id="10059330at2759"/>
<dbReference type="PhylomeDB" id="Q5ZKG1"/>
<dbReference type="TreeFam" id="TF106130"/>
<dbReference type="Reactome" id="R-GGA-5389840">
    <property type="pathway name" value="Mitochondrial translation elongation"/>
</dbReference>
<dbReference type="Reactome" id="R-GGA-5419276">
    <property type="pathway name" value="Mitochondrial translation termination"/>
</dbReference>
<dbReference type="PRO" id="PR:Q5ZKG1"/>
<dbReference type="Proteomes" id="UP000000539">
    <property type="component" value="Chromosome 1"/>
</dbReference>
<dbReference type="Bgee" id="ENSGALG00000014435">
    <property type="expression patterns" value="Expressed in heart and 13 other cell types or tissues"/>
</dbReference>
<dbReference type="GO" id="GO:0005762">
    <property type="term" value="C:mitochondrial large ribosomal subunit"/>
    <property type="evidence" value="ECO:0000250"/>
    <property type="project" value="UniProtKB"/>
</dbReference>
<dbReference type="GO" id="GO:0003735">
    <property type="term" value="F:structural constituent of ribosome"/>
    <property type="evidence" value="ECO:0000250"/>
    <property type="project" value="UniProtKB"/>
</dbReference>
<dbReference type="GO" id="GO:0006412">
    <property type="term" value="P:translation"/>
    <property type="evidence" value="ECO:0000250"/>
    <property type="project" value="UniProtKB"/>
</dbReference>
<dbReference type="InterPro" id="IPR019373">
    <property type="entry name" value="Ribosomal_mL51"/>
</dbReference>
<dbReference type="PANTHER" id="PTHR13409:SF0">
    <property type="entry name" value="LARGE RIBOSOMAL SUBUNIT PROTEIN ML51"/>
    <property type="match status" value="1"/>
</dbReference>
<dbReference type="PANTHER" id="PTHR13409">
    <property type="entry name" value="MITOCHONDRIAL 39S RIBOSOMAL PROTEIN L51"/>
    <property type="match status" value="1"/>
</dbReference>
<dbReference type="Pfam" id="PF10244">
    <property type="entry name" value="MRP-L51"/>
    <property type="match status" value="1"/>
</dbReference>
<reference key="1">
    <citation type="journal article" date="2005" name="Genome Biol.">
        <title>Full-length cDNAs from chicken bursal lymphocytes to facilitate gene function analysis.</title>
        <authorList>
            <person name="Caldwell R.B."/>
            <person name="Kierzek A.M."/>
            <person name="Arakawa H."/>
            <person name="Bezzubov Y."/>
            <person name="Zaim J."/>
            <person name="Fiedler P."/>
            <person name="Kutter S."/>
            <person name="Blagodatski A."/>
            <person name="Kostovska D."/>
            <person name="Koter M."/>
            <person name="Plachy J."/>
            <person name="Carninci P."/>
            <person name="Hayashizaki Y."/>
            <person name="Buerstedde J.-M."/>
        </authorList>
    </citation>
    <scope>NUCLEOTIDE SEQUENCE [LARGE SCALE MRNA]</scope>
    <source>
        <strain>CB</strain>
        <tissue>Bursa of Fabricius</tissue>
    </source>
</reference>
<name>RM51_CHICK</name>
<proteinExistence type="evidence at transcript level"/>
<feature type="transit peptide" description="Mitochondrion" evidence="2">
    <location>
        <begin position="1"/>
        <end position="52"/>
    </location>
</feature>
<feature type="chain" id="PRO_0000273084" description="Large ribosomal subunit protein mL51">
    <location>
        <begin position="53"/>
        <end position="143"/>
    </location>
</feature>